<protein>
    <recommendedName>
        <fullName evidence="2">Large ribosomal subunit protein bL32c</fullName>
    </recommendedName>
    <alternativeName>
        <fullName>50S ribosomal protein L32, chloroplastic</fullName>
    </alternativeName>
</protein>
<proteinExistence type="inferred from homology"/>
<name>RK32_MARPO</name>
<evidence type="ECO:0000250" key="1"/>
<evidence type="ECO:0000305" key="2"/>
<geneLocation type="chloroplast"/>
<organism>
    <name type="scientific">Marchantia polymorpha</name>
    <name type="common">Common liverwort</name>
    <name type="synonym">Marchantia aquatica</name>
    <dbReference type="NCBI Taxonomy" id="3197"/>
    <lineage>
        <taxon>Eukaryota</taxon>
        <taxon>Viridiplantae</taxon>
        <taxon>Streptophyta</taxon>
        <taxon>Embryophyta</taxon>
        <taxon>Marchantiophyta</taxon>
        <taxon>Marchantiopsida</taxon>
        <taxon>Marchantiidae</taxon>
        <taxon>Marchantiales</taxon>
        <taxon>Marchantiaceae</taxon>
        <taxon>Marchantia</taxon>
    </lineage>
</organism>
<keyword id="KW-0150">Chloroplast</keyword>
<keyword id="KW-0934">Plastid</keyword>
<keyword id="KW-0687">Ribonucleoprotein</keyword>
<keyword id="KW-0689">Ribosomal protein</keyword>
<accession>P12196</accession>
<gene>
    <name type="primary">rpl32</name>
</gene>
<sequence>MAVPKKRTSKSKTRIRKAIWKNKANKSALRAFSLAKSILTNRSKSFYYTINDKLLNSSKSISTSKLDES</sequence>
<feature type="initiator methionine" description="Removed" evidence="1">
    <location>
        <position position="1"/>
    </location>
</feature>
<feature type="chain" id="PRO_0000172464" description="Large ribosomal subunit protein bL32c">
    <location>
        <begin position="2"/>
        <end position="69"/>
    </location>
</feature>
<dbReference type="EMBL" id="X04465">
    <property type="protein sequence ID" value="CAA28131.1"/>
    <property type="molecule type" value="Genomic_DNA"/>
</dbReference>
<dbReference type="PIR" id="S01514">
    <property type="entry name" value="A05061"/>
</dbReference>
<dbReference type="RefSeq" id="NP_039345.1">
    <property type="nucleotide sequence ID" value="NC_001319.1"/>
</dbReference>
<dbReference type="RefSeq" id="YP_009646857.1">
    <property type="nucleotide sequence ID" value="NC_042505.1"/>
</dbReference>
<dbReference type="SMR" id="P12196"/>
<dbReference type="GeneID" id="2702612"/>
<dbReference type="GeneID" id="40386725"/>
<dbReference type="GO" id="GO:0009507">
    <property type="term" value="C:chloroplast"/>
    <property type="evidence" value="ECO:0007669"/>
    <property type="project" value="UniProtKB-SubCell"/>
</dbReference>
<dbReference type="GO" id="GO:0015934">
    <property type="term" value="C:large ribosomal subunit"/>
    <property type="evidence" value="ECO:0007669"/>
    <property type="project" value="InterPro"/>
</dbReference>
<dbReference type="GO" id="GO:0003735">
    <property type="term" value="F:structural constituent of ribosome"/>
    <property type="evidence" value="ECO:0007669"/>
    <property type="project" value="InterPro"/>
</dbReference>
<dbReference type="GO" id="GO:0006412">
    <property type="term" value="P:translation"/>
    <property type="evidence" value="ECO:0007669"/>
    <property type="project" value="UniProtKB-UniRule"/>
</dbReference>
<dbReference type="HAMAP" id="MF_00340">
    <property type="entry name" value="Ribosomal_bL32"/>
    <property type="match status" value="1"/>
</dbReference>
<dbReference type="InterPro" id="IPR002677">
    <property type="entry name" value="Ribosomal_bL32"/>
</dbReference>
<dbReference type="InterPro" id="IPR044958">
    <property type="entry name" value="Ribosomal_bL32_plant/cyanobact"/>
</dbReference>
<dbReference type="InterPro" id="IPR011332">
    <property type="entry name" value="Ribosomal_zn-bd"/>
</dbReference>
<dbReference type="PANTHER" id="PTHR36083">
    <property type="entry name" value="50S RIBOSOMAL PROTEIN L32, CHLOROPLASTIC"/>
    <property type="match status" value="1"/>
</dbReference>
<dbReference type="PANTHER" id="PTHR36083:SF1">
    <property type="entry name" value="LARGE RIBOSOMAL SUBUNIT PROTEIN BL32C"/>
    <property type="match status" value="1"/>
</dbReference>
<dbReference type="Pfam" id="PF01783">
    <property type="entry name" value="Ribosomal_L32p"/>
    <property type="match status" value="1"/>
</dbReference>
<dbReference type="SUPFAM" id="SSF57829">
    <property type="entry name" value="Zn-binding ribosomal proteins"/>
    <property type="match status" value="1"/>
</dbReference>
<reference key="1">
    <citation type="journal article" date="1986" name="Nature">
        <title>Chloroplast gene organization deduced from complete sequence of liverwort Marchantia polymorpha chloroplast DNA.</title>
        <authorList>
            <person name="Ohyama K."/>
            <person name="Fukuzawa H."/>
            <person name="Kohchi T."/>
            <person name="Shirai H."/>
            <person name="Sano T."/>
            <person name="Sano S."/>
            <person name="Umesono K."/>
            <person name="Shiki Y."/>
            <person name="Takeuchi M."/>
            <person name="Chang Z."/>
            <person name="Aota S."/>
            <person name="Inokuchi H."/>
            <person name="Ozeki H."/>
        </authorList>
    </citation>
    <scope>NUCLEOTIDE SEQUENCE [LARGE SCALE GENOMIC DNA]</scope>
</reference>
<reference key="2">
    <citation type="journal article" date="1988" name="J. Mol. Biol.">
        <title>Structure and organization of Marchantia polymorpha chloroplast genome. IV. Inverted repeat and small single copy regions.</title>
        <authorList>
            <person name="Kohchi T."/>
            <person name="Shirai H."/>
            <person name="Fukuzawa H."/>
            <person name="Sano T."/>
            <person name="Komano T."/>
            <person name="Umesono K."/>
            <person name="Inokuchi H."/>
            <person name="Ozeki H."/>
            <person name="Ohyama K."/>
        </authorList>
    </citation>
    <scope>NUCLEOTIDE SEQUENCE [GENOMIC DNA]</scope>
</reference>
<comment type="subcellular location">
    <subcellularLocation>
        <location>Plastid</location>
        <location>Chloroplast</location>
    </subcellularLocation>
</comment>
<comment type="similarity">
    <text evidence="2">Belongs to the bacterial ribosomal protein bL32 family.</text>
</comment>